<feature type="chain" id="PRO_0000104093" description="Uncharacterized protein Rv2895c">
    <location>
        <begin position="1"/>
        <end position="283"/>
    </location>
</feature>
<feature type="domain" description="FAD-binding FR-type" evidence="1">
    <location>
        <begin position="4"/>
        <end position="131"/>
    </location>
</feature>
<protein>
    <recommendedName>
        <fullName>Uncharacterized protein Rv2895c</fullName>
    </recommendedName>
</protein>
<organism>
    <name type="scientific">Mycobacterium tuberculosis (strain ATCC 25618 / H37Rv)</name>
    <dbReference type="NCBI Taxonomy" id="83332"/>
    <lineage>
        <taxon>Bacteria</taxon>
        <taxon>Bacillati</taxon>
        <taxon>Actinomycetota</taxon>
        <taxon>Actinomycetes</taxon>
        <taxon>Mycobacteriales</taxon>
        <taxon>Mycobacteriaceae</taxon>
        <taxon>Mycobacterium</taxon>
        <taxon>Mycobacterium tuberculosis complex</taxon>
    </lineage>
</organism>
<dbReference type="EMBL" id="AL123456">
    <property type="protein sequence ID" value="CCP45697.1"/>
    <property type="molecule type" value="Genomic_DNA"/>
</dbReference>
<dbReference type="PIR" id="B70926">
    <property type="entry name" value="B70926"/>
</dbReference>
<dbReference type="RefSeq" id="WP_003900590.1">
    <property type="nucleotide sequence ID" value="NZ_NVQJ01000006.1"/>
</dbReference>
<dbReference type="SMR" id="P9WL31"/>
<dbReference type="STRING" id="83332.Rv2895c"/>
<dbReference type="TCDB" id="3.A.1.21.2">
    <property type="family name" value="the atp-binding cassette (abc) superfamily"/>
</dbReference>
<dbReference type="PaxDb" id="83332-Rv2895c"/>
<dbReference type="DNASU" id="888180"/>
<dbReference type="KEGG" id="mtu:Rv2895c"/>
<dbReference type="KEGG" id="mtv:RVBD_2895c"/>
<dbReference type="TubercuList" id="Rv2895c"/>
<dbReference type="eggNOG" id="COG2375">
    <property type="taxonomic scope" value="Bacteria"/>
</dbReference>
<dbReference type="InParanoid" id="P9WL31"/>
<dbReference type="OrthoDB" id="9814826at2"/>
<dbReference type="PhylomeDB" id="P9WL31"/>
<dbReference type="Reactome" id="R-HSA-1222449">
    <property type="pathway name" value="Mtb iron assimilation by chelation"/>
</dbReference>
<dbReference type="Proteomes" id="UP000001584">
    <property type="component" value="Chromosome"/>
</dbReference>
<dbReference type="GO" id="GO:0005886">
    <property type="term" value="C:plasma membrane"/>
    <property type="evidence" value="ECO:0000314"/>
    <property type="project" value="MTBBASE"/>
</dbReference>
<dbReference type="GO" id="GO:0071949">
    <property type="term" value="F:FAD binding"/>
    <property type="evidence" value="ECO:0000318"/>
    <property type="project" value="GO_Central"/>
</dbReference>
<dbReference type="GO" id="GO:0052851">
    <property type="term" value="F:ferric-chelate reductase (NADPH) activity"/>
    <property type="evidence" value="ECO:0000318"/>
    <property type="project" value="GO_Central"/>
</dbReference>
<dbReference type="GO" id="GO:0010106">
    <property type="term" value="P:cellular response to iron ion starvation"/>
    <property type="evidence" value="ECO:0000270"/>
    <property type="project" value="MTBBASE"/>
</dbReference>
<dbReference type="GO" id="GO:0033212">
    <property type="term" value="P:iron import into cell"/>
    <property type="evidence" value="ECO:0000318"/>
    <property type="project" value="GO_Central"/>
</dbReference>
<dbReference type="GO" id="GO:0015891">
    <property type="term" value="P:siderophore transport"/>
    <property type="evidence" value="ECO:0000314"/>
    <property type="project" value="MTBBASE"/>
</dbReference>
<dbReference type="CDD" id="cd06193">
    <property type="entry name" value="siderophore_interacting"/>
    <property type="match status" value="1"/>
</dbReference>
<dbReference type="FunFam" id="3.40.50.80:FF:000038">
    <property type="entry name" value="Vibriobactin utilization protein ViuB"/>
    <property type="match status" value="1"/>
</dbReference>
<dbReference type="Gene3D" id="3.40.50.80">
    <property type="entry name" value="Nucleotide-binding domain of ferredoxin-NADP reductase (FNR) module"/>
    <property type="match status" value="1"/>
</dbReference>
<dbReference type="Gene3D" id="2.40.30.10">
    <property type="entry name" value="Translation factors"/>
    <property type="match status" value="1"/>
</dbReference>
<dbReference type="InterPro" id="IPR013113">
    <property type="entry name" value="FAD-bd_9_SIP"/>
</dbReference>
<dbReference type="InterPro" id="IPR017927">
    <property type="entry name" value="FAD-bd_FR_type"/>
</dbReference>
<dbReference type="InterPro" id="IPR039261">
    <property type="entry name" value="FNR_nucleotide-bd"/>
</dbReference>
<dbReference type="InterPro" id="IPR017938">
    <property type="entry name" value="Riboflavin_synthase-like_b-brl"/>
</dbReference>
<dbReference type="InterPro" id="IPR007037">
    <property type="entry name" value="SIP_C"/>
</dbReference>
<dbReference type="InterPro" id="IPR039374">
    <property type="entry name" value="SIP_fam"/>
</dbReference>
<dbReference type="PANTHER" id="PTHR30157">
    <property type="entry name" value="FERRIC REDUCTASE, NADPH-DEPENDENT"/>
    <property type="match status" value="1"/>
</dbReference>
<dbReference type="PANTHER" id="PTHR30157:SF0">
    <property type="entry name" value="NADPH-DEPENDENT FERRIC-CHELATE REDUCTASE"/>
    <property type="match status" value="1"/>
</dbReference>
<dbReference type="Pfam" id="PF08021">
    <property type="entry name" value="FAD_binding_9"/>
    <property type="match status" value="1"/>
</dbReference>
<dbReference type="Pfam" id="PF04954">
    <property type="entry name" value="SIP"/>
    <property type="match status" value="1"/>
</dbReference>
<dbReference type="SUPFAM" id="SSF63380">
    <property type="entry name" value="Riboflavin synthase domain-like"/>
    <property type="match status" value="1"/>
</dbReference>
<dbReference type="PROSITE" id="PS51384">
    <property type="entry name" value="FAD_FR"/>
    <property type="match status" value="1"/>
</dbReference>
<evidence type="ECO:0000255" key="1">
    <source>
        <dbReference type="PROSITE-ProRule" id="PRU00716"/>
    </source>
</evidence>
<name>Y2895_MYCTU</name>
<reference key="1">
    <citation type="journal article" date="1998" name="Nature">
        <title>Deciphering the biology of Mycobacterium tuberculosis from the complete genome sequence.</title>
        <authorList>
            <person name="Cole S.T."/>
            <person name="Brosch R."/>
            <person name="Parkhill J."/>
            <person name="Garnier T."/>
            <person name="Churcher C.M."/>
            <person name="Harris D.E."/>
            <person name="Gordon S.V."/>
            <person name="Eiglmeier K."/>
            <person name="Gas S."/>
            <person name="Barry C.E. III"/>
            <person name="Tekaia F."/>
            <person name="Badcock K."/>
            <person name="Basham D."/>
            <person name="Brown D."/>
            <person name="Chillingworth T."/>
            <person name="Connor R."/>
            <person name="Davies R.M."/>
            <person name="Devlin K."/>
            <person name="Feltwell T."/>
            <person name="Gentles S."/>
            <person name="Hamlin N."/>
            <person name="Holroyd S."/>
            <person name="Hornsby T."/>
            <person name="Jagels K."/>
            <person name="Krogh A."/>
            <person name="McLean J."/>
            <person name="Moule S."/>
            <person name="Murphy L.D."/>
            <person name="Oliver S."/>
            <person name="Osborne J."/>
            <person name="Quail M.A."/>
            <person name="Rajandream M.A."/>
            <person name="Rogers J."/>
            <person name="Rutter S."/>
            <person name="Seeger K."/>
            <person name="Skelton S."/>
            <person name="Squares S."/>
            <person name="Squares R."/>
            <person name="Sulston J.E."/>
            <person name="Taylor K."/>
            <person name="Whitehead S."/>
            <person name="Barrell B.G."/>
        </authorList>
    </citation>
    <scope>NUCLEOTIDE SEQUENCE [LARGE SCALE GENOMIC DNA]</scope>
    <source>
        <strain>ATCC 25618 / H37Rv</strain>
    </source>
</reference>
<reference key="2">
    <citation type="journal article" date="2011" name="Mol. Cell. Proteomics">
        <title>Proteogenomic analysis of Mycobacterium tuberculosis by high resolution mass spectrometry.</title>
        <authorList>
            <person name="Kelkar D.S."/>
            <person name="Kumar D."/>
            <person name="Kumar P."/>
            <person name="Balakrishnan L."/>
            <person name="Muthusamy B."/>
            <person name="Yadav A.K."/>
            <person name="Shrivastava P."/>
            <person name="Marimuthu A."/>
            <person name="Anand S."/>
            <person name="Sundaram H."/>
            <person name="Kingsbury R."/>
            <person name="Harsha H.C."/>
            <person name="Nair B."/>
            <person name="Prasad T.S."/>
            <person name="Chauhan D.S."/>
            <person name="Katoch K."/>
            <person name="Katoch V.M."/>
            <person name="Kumar P."/>
            <person name="Chaerkady R."/>
            <person name="Ramachandran S."/>
            <person name="Dash D."/>
            <person name="Pandey A."/>
        </authorList>
    </citation>
    <scope>IDENTIFICATION BY MASS SPECTROMETRY [LARGE SCALE ANALYSIS]</scope>
    <source>
        <strain>ATCC 25618 / H37Rv</strain>
    </source>
</reference>
<gene>
    <name type="ordered locus">Rv2895c</name>
    <name type="ORF">MTCY274.26c</name>
</gene>
<proteinExistence type="evidence at protein level"/>
<keyword id="KW-1185">Reference proteome</keyword>
<accession>P9WL31</accession>
<accession>L0TDV8</accession>
<accession>P65049</accession>
<accession>Q10816</accession>
<sequence>MAGRPLHAFEVVATRHLAPHMVRVVLGGSGFDTFVPSDFTDSYIKLVFVDDDVDVGRLPRPLTLDSFADLPTAKRPPVRTMTVRHVDAAAREIAVDIVLHGEHGVAGPWAAGAQRGQPIYLMGPGGAYAPDPAADWHLLAGDESAIPAIAAALEALPPDAIGRAFIEVAGPDDEIGLTAPDAVEVNWVYRGGRADLVPEDRAGDHAPLIEAVTTTAWLPGQVHVFIHGEAQAVMHNLRPYVRNERGVDAKWASSISGYWRRGRTEEMFRKWKKELAEAEAGTH</sequence>